<dbReference type="EC" id="5.2.1.8" evidence="1"/>
<dbReference type="EMBL" id="CP000726">
    <property type="protein sequence ID" value="ABS35399.1"/>
    <property type="molecule type" value="Genomic_DNA"/>
</dbReference>
<dbReference type="RefSeq" id="WP_012048204.1">
    <property type="nucleotide sequence ID" value="NC_009697.1"/>
</dbReference>
<dbReference type="SMR" id="A7FYI3"/>
<dbReference type="GeneID" id="5185113"/>
<dbReference type="KEGG" id="cba:CLB_3269"/>
<dbReference type="HOGENOM" id="CLU_033058_3_2_9"/>
<dbReference type="GO" id="GO:0005737">
    <property type="term" value="C:cytoplasm"/>
    <property type="evidence" value="ECO:0007669"/>
    <property type="project" value="UniProtKB-SubCell"/>
</dbReference>
<dbReference type="GO" id="GO:0003755">
    <property type="term" value="F:peptidyl-prolyl cis-trans isomerase activity"/>
    <property type="evidence" value="ECO:0007669"/>
    <property type="project" value="UniProtKB-UniRule"/>
</dbReference>
<dbReference type="GO" id="GO:0044183">
    <property type="term" value="F:protein folding chaperone"/>
    <property type="evidence" value="ECO:0007669"/>
    <property type="project" value="TreeGrafter"/>
</dbReference>
<dbReference type="GO" id="GO:0043022">
    <property type="term" value="F:ribosome binding"/>
    <property type="evidence" value="ECO:0007669"/>
    <property type="project" value="TreeGrafter"/>
</dbReference>
<dbReference type="GO" id="GO:0051083">
    <property type="term" value="P:'de novo' cotranslational protein folding"/>
    <property type="evidence" value="ECO:0007669"/>
    <property type="project" value="TreeGrafter"/>
</dbReference>
<dbReference type="GO" id="GO:0051301">
    <property type="term" value="P:cell division"/>
    <property type="evidence" value="ECO:0007669"/>
    <property type="project" value="UniProtKB-KW"/>
</dbReference>
<dbReference type="GO" id="GO:0061077">
    <property type="term" value="P:chaperone-mediated protein folding"/>
    <property type="evidence" value="ECO:0007669"/>
    <property type="project" value="TreeGrafter"/>
</dbReference>
<dbReference type="GO" id="GO:0015031">
    <property type="term" value="P:protein transport"/>
    <property type="evidence" value="ECO:0007669"/>
    <property type="project" value="UniProtKB-UniRule"/>
</dbReference>
<dbReference type="GO" id="GO:0043335">
    <property type="term" value="P:protein unfolding"/>
    <property type="evidence" value="ECO:0007669"/>
    <property type="project" value="TreeGrafter"/>
</dbReference>
<dbReference type="FunFam" id="1.10.3120.10:FF:000010">
    <property type="entry name" value="Trigger factor"/>
    <property type="match status" value="1"/>
</dbReference>
<dbReference type="FunFam" id="3.10.50.40:FF:000001">
    <property type="entry name" value="Trigger factor"/>
    <property type="match status" value="1"/>
</dbReference>
<dbReference type="Gene3D" id="3.10.50.40">
    <property type="match status" value="1"/>
</dbReference>
<dbReference type="Gene3D" id="3.30.70.1050">
    <property type="entry name" value="Trigger factor ribosome-binding domain"/>
    <property type="match status" value="1"/>
</dbReference>
<dbReference type="Gene3D" id="1.10.3120.10">
    <property type="entry name" value="Trigger factor, C-terminal domain"/>
    <property type="match status" value="1"/>
</dbReference>
<dbReference type="HAMAP" id="MF_00303">
    <property type="entry name" value="Trigger_factor_Tig"/>
    <property type="match status" value="1"/>
</dbReference>
<dbReference type="InterPro" id="IPR046357">
    <property type="entry name" value="PPIase_dom_sf"/>
</dbReference>
<dbReference type="InterPro" id="IPR001179">
    <property type="entry name" value="PPIase_FKBP_dom"/>
</dbReference>
<dbReference type="InterPro" id="IPR005215">
    <property type="entry name" value="Trig_fac"/>
</dbReference>
<dbReference type="InterPro" id="IPR008880">
    <property type="entry name" value="Trigger_fac_C"/>
</dbReference>
<dbReference type="InterPro" id="IPR037041">
    <property type="entry name" value="Trigger_fac_C_sf"/>
</dbReference>
<dbReference type="InterPro" id="IPR008881">
    <property type="entry name" value="Trigger_fac_ribosome-bd_bac"/>
</dbReference>
<dbReference type="InterPro" id="IPR036611">
    <property type="entry name" value="Trigger_fac_ribosome-bd_sf"/>
</dbReference>
<dbReference type="InterPro" id="IPR027304">
    <property type="entry name" value="Trigger_fact/SurA_dom_sf"/>
</dbReference>
<dbReference type="NCBIfam" id="TIGR00115">
    <property type="entry name" value="tig"/>
    <property type="match status" value="1"/>
</dbReference>
<dbReference type="PANTHER" id="PTHR30560">
    <property type="entry name" value="TRIGGER FACTOR CHAPERONE AND PEPTIDYL-PROLYL CIS/TRANS ISOMERASE"/>
    <property type="match status" value="1"/>
</dbReference>
<dbReference type="PANTHER" id="PTHR30560:SF3">
    <property type="entry name" value="TRIGGER FACTOR-LIKE PROTEIN TIG, CHLOROPLASTIC"/>
    <property type="match status" value="1"/>
</dbReference>
<dbReference type="Pfam" id="PF00254">
    <property type="entry name" value="FKBP_C"/>
    <property type="match status" value="1"/>
</dbReference>
<dbReference type="Pfam" id="PF05698">
    <property type="entry name" value="Trigger_C"/>
    <property type="match status" value="1"/>
</dbReference>
<dbReference type="Pfam" id="PF05697">
    <property type="entry name" value="Trigger_N"/>
    <property type="match status" value="1"/>
</dbReference>
<dbReference type="PIRSF" id="PIRSF003095">
    <property type="entry name" value="Trigger_factor"/>
    <property type="match status" value="1"/>
</dbReference>
<dbReference type="SUPFAM" id="SSF54534">
    <property type="entry name" value="FKBP-like"/>
    <property type="match status" value="1"/>
</dbReference>
<dbReference type="SUPFAM" id="SSF109998">
    <property type="entry name" value="Triger factor/SurA peptide-binding domain-like"/>
    <property type="match status" value="1"/>
</dbReference>
<dbReference type="SUPFAM" id="SSF102735">
    <property type="entry name" value="Trigger factor ribosome-binding domain"/>
    <property type="match status" value="1"/>
</dbReference>
<dbReference type="PROSITE" id="PS50059">
    <property type="entry name" value="FKBP_PPIASE"/>
    <property type="match status" value="1"/>
</dbReference>
<comment type="function">
    <text evidence="1">Involved in protein export. Acts as a chaperone by maintaining the newly synthesized protein in an open conformation. Functions as a peptidyl-prolyl cis-trans isomerase.</text>
</comment>
<comment type="catalytic activity">
    <reaction evidence="1">
        <text>[protein]-peptidylproline (omega=180) = [protein]-peptidylproline (omega=0)</text>
        <dbReference type="Rhea" id="RHEA:16237"/>
        <dbReference type="Rhea" id="RHEA-COMP:10747"/>
        <dbReference type="Rhea" id="RHEA-COMP:10748"/>
        <dbReference type="ChEBI" id="CHEBI:83833"/>
        <dbReference type="ChEBI" id="CHEBI:83834"/>
        <dbReference type="EC" id="5.2.1.8"/>
    </reaction>
</comment>
<comment type="subcellular location">
    <subcellularLocation>
        <location>Cytoplasm</location>
    </subcellularLocation>
    <text evidence="1">About half TF is bound to the ribosome near the polypeptide exit tunnel while the other half is free in the cytoplasm.</text>
</comment>
<comment type="domain">
    <text evidence="1">Consists of 3 domains; the N-terminus binds the ribosome, the middle domain has PPIase activity, while the C-terminus has intrinsic chaperone activity on its own.</text>
</comment>
<comment type="similarity">
    <text evidence="1">Belongs to the FKBP-type PPIase family. Tig subfamily.</text>
</comment>
<gene>
    <name evidence="1" type="primary">tig</name>
    <name type="ordered locus">CLB_3269</name>
</gene>
<name>TIG_CLOB1</name>
<evidence type="ECO:0000255" key="1">
    <source>
        <dbReference type="HAMAP-Rule" id="MF_00303"/>
    </source>
</evidence>
<reference key="1">
    <citation type="journal article" date="2007" name="PLoS ONE">
        <title>Analysis of the neurotoxin complex genes in Clostridium botulinum A1-A4 and B1 strains: BoNT/A3, /Ba4 and /B1 clusters are located within plasmids.</title>
        <authorList>
            <person name="Smith T.J."/>
            <person name="Hill K.K."/>
            <person name="Foley B.T."/>
            <person name="Detter J.C."/>
            <person name="Munk A.C."/>
            <person name="Bruce D.C."/>
            <person name="Doggett N.A."/>
            <person name="Smith L.A."/>
            <person name="Marks J.D."/>
            <person name="Xie G."/>
            <person name="Brettin T.S."/>
        </authorList>
    </citation>
    <scope>NUCLEOTIDE SEQUENCE [LARGE SCALE GENOMIC DNA]</scope>
    <source>
        <strain>ATCC 19397 / Type A</strain>
    </source>
</reference>
<keyword id="KW-0131">Cell cycle</keyword>
<keyword id="KW-0132">Cell division</keyword>
<keyword id="KW-0143">Chaperone</keyword>
<keyword id="KW-0963">Cytoplasm</keyword>
<keyword id="KW-0413">Isomerase</keyword>
<keyword id="KW-0697">Rotamase</keyword>
<accession>A7FYI3</accession>
<feature type="chain" id="PRO_1000022668" description="Trigger factor">
    <location>
        <begin position="1"/>
        <end position="430"/>
    </location>
</feature>
<feature type="domain" description="PPIase FKBP-type" evidence="1">
    <location>
        <begin position="163"/>
        <end position="248"/>
    </location>
</feature>
<protein>
    <recommendedName>
        <fullName evidence="1">Trigger factor</fullName>
        <shortName evidence="1">TF</shortName>
        <ecNumber evidence="1">5.2.1.8</ecNumber>
    </recommendedName>
    <alternativeName>
        <fullName evidence="1">PPIase</fullName>
    </alternativeName>
</protein>
<organism>
    <name type="scientific">Clostridium botulinum (strain ATCC 19397 / Type A)</name>
    <dbReference type="NCBI Taxonomy" id="441770"/>
    <lineage>
        <taxon>Bacteria</taxon>
        <taxon>Bacillati</taxon>
        <taxon>Bacillota</taxon>
        <taxon>Clostridia</taxon>
        <taxon>Eubacteriales</taxon>
        <taxon>Clostridiaceae</taxon>
        <taxon>Clostridium</taxon>
    </lineage>
</organism>
<sequence length="430" mass="48924">MNVKVENIEKNVVKLEITVDSEKFNEAVKKSFKKNAKRFNVPGFRKGKAPLNIIKKYYGEGVLFEDAINFCCEDTYPKAIEENNIKPVDYPQIDVVQIGEGKDFIYTAEVTTVPEVKLGEYKGVEVKKVSYEVEDEAVENELKSMQEKNARVSLKEEGEIEKGNIAIIDFKGYVDGKAFEGGEAKDYEIEIGSGTFIGDFEDQLVGLKKDESKEVNVSFPEEYGREDLNGKPATFEVTIKDIKVKELPALDDEFAKEVSEFDTLEELKSDIKDRMKKELSEKAKAEYEEAVVEAVGANAEIEIPKVMIEKEIENMVRDLEMRLKYQGLDLKSYYEFTNSSEEKVKEYMRETAEKRVKTDLIMQEIAKVEDIKATEEELKEKAMEVAKQYGQKDVEKTAELIANAQKAYLEIDIVNGKVLDLLVESSKEIA</sequence>
<proteinExistence type="inferred from homology"/>